<evidence type="ECO:0000255" key="1">
    <source>
        <dbReference type="HAMAP-Rule" id="MF_00044"/>
    </source>
</evidence>
<gene>
    <name evidence="1" type="primary">aspS</name>
    <name type="ordered locus">RPC_2336</name>
</gene>
<name>SYDND_RHOPB</name>
<proteinExistence type="inferred from homology"/>
<reference key="1">
    <citation type="submission" date="2006-03" db="EMBL/GenBank/DDBJ databases">
        <title>Complete sequence of Rhodopseudomonas palustris BisB18.</title>
        <authorList>
            <consortium name="US DOE Joint Genome Institute"/>
            <person name="Copeland A."/>
            <person name="Lucas S."/>
            <person name="Lapidus A."/>
            <person name="Barry K."/>
            <person name="Detter J.C."/>
            <person name="Glavina del Rio T."/>
            <person name="Hammon N."/>
            <person name="Israni S."/>
            <person name="Dalin E."/>
            <person name="Tice H."/>
            <person name="Pitluck S."/>
            <person name="Chain P."/>
            <person name="Malfatti S."/>
            <person name="Shin M."/>
            <person name="Vergez L."/>
            <person name="Schmutz J."/>
            <person name="Larimer F."/>
            <person name="Land M."/>
            <person name="Hauser L."/>
            <person name="Pelletier D.A."/>
            <person name="Kyrpides N."/>
            <person name="Anderson I."/>
            <person name="Oda Y."/>
            <person name="Harwood C.S."/>
            <person name="Richardson P."/>
        </authorList>
    </citation>
    <scope>NUCLEOTIDE SEQUENCE [LARGE SCALE GENOMIC DNA]</scope>
    <source>
        <strain>BisB18</strain>
    </source>
</reference>
<accession>Q215P7</accession>
<comment type="function">
    <text evidence="1">Aspartyl-tRNA synthetase with relaxed tRNA specificity since it is able to aspartylate not only its cognate tRNA(Asp) but also tRNA(Asn). Reaction proceeds in two steps: L-aspartate is first activated by ATP to form Asp-AMP and then transferred to the acceptor end of tRNA(Asp/Asn).</text>
</comment>
<comment type="catalytic activity">
    <reaction evidence="1">
        <text>tRNA(Asx) + L-aspartate + ATP = L-aspartyl-tRNA(Asx) + AMP + diphosphate</text>
        <dbReference type="Rhea" id="RHEA:18349"/>
        <dbReference type="Rhea" id="RHEA-COMP:9710"/>
        <dbReference type="Rhea" id="RHEA-COMP:9711"/>
        <dbReference type="ChEBI" id="CHEBI:29991"/>
        <dbReference type="ChEBI" id="CHEBI:30616"/>
        <dbReference type="ChEBI" id="CHEBI:33019"/>
        <dbReference type="ChEBI" id="CHEBI:78442"/>
        <dbReference type="ChEBI" id="CHEBI:78516"/>
        <dbReference type="ChEBI" id="CHEBI:456215"/>
        <dbReference type="EC" id="6.1.1.23"/>
    </reaction>
</comment>
<comment type="subunit">
    <text evidence="1">Homodimer.</text>
</comment>
<comment type="subcellular location">
    <subcellularLocation>
        <location evidence="1">Cytoplasm</location>
    </subcellularLocation>
</comment>
<comment type="similarity">
    <text evidence="1">Belongs to the class-II aminoacyl-tRNA synthetase family. Type 1 subfamily.</text>
</comment>
<dbReference type="EC" id="6.1.1.23" evidence="1"/>
<dbReference type="EMBL" id="CP000301">
    <property type="protein sequence ID" value="ABD87889.1"/>
    <property type="molecule type" value="Genomic_DNA"/>
</dbReference>
<dbReference type="SMR" id="Q215P7"/>
<dbReference type="STRING" id="316056.RPC_2336"/>
<dbReference type="KEGG" id="rpc:RPC_2336"/>
<dbReference type="eggNOG" id="COG0173">
    <property type="taxonomic scope" value="Bacteria"/>
</dbReference>
<dbReference type="HOGENOM" id="CLU_014330_3_2_5"/>
<dbReference type="OrthoDB" id="9802326at2"/>
<dbReference type="GO" id="GO:0005737">
    <property type="term" value="C:cytoplasm"/>
    <property type="evidence" value="ECO:0007669"/>
    <property type="project" value="UniProtKB-SubCell"/>
</dbReference>
<dbReference type="GO" id="GO:0004815">
    <property type="term" value="F:aspartate-tRNA ligase activity"/>
    <property type="evidence" value="ECO:0007669"/>
    <property type="project" value="UniProtKB-UniRule"/>
</dbReference>
<dbReference type="GO" id="GO:0050560">
    <property type="term" value="F:aspartate-tRNA(Asn) ligase activity"/>
    <property type="evidence" value="ECO:0007669"/>
    <property type="project" value="UniProtKB-EC"/>
</dbReference>
<dbReference type="GO" id="GO:0005524">
    <property type="term" value="F:ATP binding"/>
    <property type="evidence" value="ECO:0007669"/>
    <property type="project" value="UniProtKB-UniRule"/>
</dbReference>
<dbReference type="GO" id="GO:0003676">
    <property type="term" value="F:nucleic acid binding"/>
    <property type="evidence" value="ECO:0007669"/>
    <property type="project" value="InterPro"/>
</dbReference>
<dbReference type="GO" id="GO:0006422">
    <property type="term" value="P:aspartyl-tRNA aminoacylation"/>
    <property type="evidence" value="ECO:0007669"/>
    <property type="project" value="UniProtKB-UniRule"/>
</dbReference>
<dbReference type="CDD" id="cd04317">
    <property type="entry name" value="EcAspRS_like_N"/>
    <property type="match status" value="1"/>
</dbReference>
<dbReference type="Gene3D" id="3.30.930.10">
    <property type="entry name" value="Bira Bifunctional Protein, Domain 2"/>
    <property type="match status" value="1"/>
</dbReference>
<dbReference type="Gene3D" id="3.30.1360.30">
    <property type="entry name" value="GAD-like domain"/>
    <property type="match status" value="1"/>
</dbReference>
<dbReference type="Gene3D" id="2.40.50.140">
    <property type="entry name" value="Nucleic acid-binding proteins"/>
    <property type="match status" value="1"/>
</dbReference>
<dbReference type="HAMAP" id="MF_00044">
    <property type="entry name" value="Asp_tRNA_synth_type1"/>
    <property type="match status" value="1"/>
</dbReference>
<dbReference type="InterPro" id="IPR004364">
    <property type="entry name" value="Aa-tRNA-synt_II"/>
</dbReference>
<dbReference type="InterPro" id="IPR006195">
    <property type="entry name" value="aa-tRNA-synth_II"/>
</dbReference>
<dbReference type="InterPro" id="IPR045864">
    <property type="entry name" value="aa-tRNA-synth_II/BPL/LPL"/>
</dbReference>
<dbReference type="InterPro" id="IPR004524">
    <property type="entry name" value="Asp-tRNA-ligase_1"/>
</dbReference>
<dbReference type="InterPro" id="IPR047089">
    <property type="entry name" value="Asp-tRNA-ligase_1_N"/>
</dbReference>
<dbReference type="InterPro" id="IPR002312">
    <property type="entry name" value="Asp/Asn-tRNA-synth_IIb"/>
</dbReference>
<dbReference type="InterPro" id="IPR004115">
    <property type="entry name" value="GAD-like_sf"/>
</dbReference>
<dbReference type="InterPro" id="IPR029351">
    <property type="entry name" value="GAD_dom"/>
</dbReference>
<dbReference type="InterPro" id="IPR012340">
    <property type="entry name" value="NA-bd_OB-fold"/>
</dbReference>
<dbReference type="InterPro" id="IPR004365">
    <property type="entry name" value="NA-bd_OB_tRNA"/>
</dbReference>
<dbReference type="NCBIfam" id="TIGR00459">
    <property type="entry name" value="aspS_bact"/>
    <property type="match status" value="1"/>
</dbReference>
<dbReference type="NCBIfam" id="NF001750">
    <property type="entry name" value="PRK00476.1"/>
    <property type="match status" value="1"/>
</dbReference>
<dbReference type="PANTHER" id="PTHR22594:SF5">
    <property type="entry name" value="ASPARTATE--TRNA LIGASE, MITOCHONDRIAL"/>
    <property type="match status" value="1"/>
</dbReference>
<dbReference type="PANTHER" id="PTHR22594">
    <property type="entry name" value="ASPARTYL/LYSYL-TRNA SYNTHETASE"/>
    <property type="match status" value="1"/>
</dbReference>
<dbReference type="Pfam" id="PF02938">
    <property type="entry name" value="GAD"/>
    <property type="match status" value="1"/>
</dbReference>
<dbReference type="Pfam" id="PF00152">
    <property type="entry name" value="tRNA-synt_2"/>
    <property type="match status" value="1"/>
</dbReference>
<dbReference type="Pfam" id="PF01336">
    <property type="entry name" value="tRNA_anti-codon"/>
    <property type="match status" value="1"/>
</dbReference>
<dbReference type="PRINTS" id="PR01042">
    <property type="entry name" value="TRNASYNTHASP"/>
</dbReference>
<dbReference type="SUPFAM" id="SSF55681">
    <property type="entry name" value="Class II aaRS and biotin synthetases"/>
    <property type="match status" value="1"/>
</dbReference>
<dbReference type="SUPFAM" id="SSF55261">
    <property type="entry name" value="GAD domain-like"/>
    <property type="match status" value="1"/>
</dbReference>
<dbReference type="SUPFAM" id="SSF50249">
    <property type="entry name" value="Nucleic acid-binding proteins"/>
    <property type="match status" value="1"/>
</dbReference>
<dbReference type="PROSITE" id="PS50862">
    <property type="entry name" value="AA_TRNA_LIGASE_II"/>
    <property type="match status" value="1"/>
</dbReference>
<protein>
    <recommendedName>
        <fullName evidence="1">Aspartate--tRNA(Asp/Asn) ligase</fullName>
        <ecNumber evidence="1">6.1.1.23</ecNumber>
    </recommendedName>
    <alternativeName>
        <fullName evidence="1">Aspartyl-tRNA synthetase</fullName>
        <shortName evidence="1">AspRS</shortName>
    </alternativeName>
    <alternativeName>
        <fullName evidence="1">Non-discriminating aspartyl-tRNA synthetase</fullName>
        <shortName evidence="1">ND-AspRS</shortName>
    </alternativeName>
</protein>
<organism>
    <name type="scientific">Rhodopseudomonas palustris (strain BisB18)</name>
    <dbReference type="NCBI Taxonomy" id="316056"/>
    <lineage>
        <taxon>Bacteria</taxon>
        <taxon>Pseudomonadati</taxon>
        <taxon>Pseudomonadota</taxon>
        <taxon>Alphaproteobacteria</taxon>
        <taxon>Hyphomicrobiales</taxon>
        <taxon>Nitrobacteraceae</taxon>
        <taxon>Rhodopseudomonas</taxon>
    </lineage>
</organism>
<sequence>MHRYRSHTCGALRESDIDQTVRVSGWCHRIRDHGGLLFIDLRDHYGLTQCVADPDSPAFKDAEKLRAEWVVRIDGKVRRRPEGTDNNDLPTGQVEIFITEIEVLGPAGELPLPVFGEQEYPEDIRLKYRFLDLRREKLHQNIMTRGAIVDSMRKRMKEQGFFEFQTPILTASSPEGARDFLVPSRIHPGRFYALPQAPQQYKQLLMMSGFDRYFQIAPCFRDEDPRADRLPGEFYQLDVEMSFITQDDVFAAMEPVITGVFEDFAKGKPVTKSWPRIAYADSLKKYGTDKPDLRNPIEMQNVSEHFRGSGFKVFARMLEEERNQVWAIPGPGGGSRAFCDRMNSWAQGEGQPGLGYIMWREGGEGAGPLANNIGPERTAAIREQLGLKAGDAAFFVAGDPSKFVRFAGLARTRLGEELNLVDKERFELAWIVDFPMYEYNEDDKKVDFSHNPFSMPQGGMDALLNQDPLTIKAFQYDITCNGFEIASGGIRNHRPEAMVKAFEIAGYGEQEVVDRFGGMYRAFQYGAPPHGGMAAGVDRIVMLLCGTNNLREISLFPMNQRAEDLLMGAPSDVTPKQLRELHIRLNLPEN</sequence>
<feature type="chain" id="PRO_1000006740" description="Aspartate--tRNA(Asp/Asn) ligase">
    <location>
        <begin position="1"/>
        <end position="590"/>
    </location>
</feature>
<feature type="region of interest" description="Aspartate" evidence="1">
    <location>
        <begin position="199"/>
        <end position="202"/>
    </location>
</feature>
<feature type="binding site" evidence="1">
    <location>
        <position position="175"/>
    </location>
    <ligand>
        <name>L-aspartate</name>
        <dbReference type="ChEBI" id="CHEBI:29991"/>
    </ligand>
</feature>
<feature type="binding site" evidence="1">
    <location>
        <begin position="221"/>
        <end position="223"/>
    </location>
    <ligand>
        <name>ATP</name>
        <dbReference type="ChEBI" id="CHEBI:30616"/>
    </ligand>
</feature>
<feature type="binding site" evidence="1">
    <location>
        <position position="221"/>
    </location>
    <ligand>
        <name>L-aspartate</name>
        <dbReference type="ChEBI" id="CHEBI:29991"/>
    </ligand>
</feature>
<feature type="binding site" evidence="1">
    <location>
        <position position="450"/>
    </location>
    <ligand>
        <name>L-aspartate</name>
        <dbReference type="ChEBI" id="CHEBI:29991"/>
    </ligand>
</feature>
<feature type="binding site" evidence="1">
    <location>
        <position position="484"/>
    </location>
    <ligand>
        <name>ATP</name>
        <dbReference type="ChEBI" id="CHEBI:30616"/>
    </ligand>
</feature>
<feature type="binding site" evidence="1">
    <location>
        <position position="491"/>
    </location>
    <ligand>
        <name>L-aspartate</name>
        <dbReference type="ChEBI" id="CHEBI:29991"/>
    </ligand>
</feature>
<feature type="binding site" evidence="1">
    <location>
        <begin position="536"/>
        <end position="539"/>
    </location>
    <ligand>
        <name>ATP</name>
        <dbReference type="ChEBI" id="CHEBI:30616"/>
    </ligand>
</feature>
<feature type="site" description="Important for tRNA non-discrimination" evidence="1">
    <location>
        <position position="33"/>
    </location>
</feature>
<feature type="site" description="Important for tRNA non-discrimination" evidence="1">
    <location>
        <position position="83"/>
    </location>
</feature>
<keyword id="KW-0030">Aminoacyl-tRNA synthetase</keyword>
<keyword id="KW-0067">ATP-binding</keyword>
<keyword id="KW-0963">Cytoplasm</keyword>
<keyword id="KW-0436">Ligase</keyword>
<keyword id="KW-0547">Nucleotide-binding</keyword>
<keyword id="KW-0648">Protein biosynthesis</keyword>